<dbReference type="EMBL" id="CP000001">
    <property type="protein sequence ID" value="AAU16075.1"/>
    <property type="molecule type" value="Genomic_DNA"/>
</dbReference>
<dbReference type="RefSeq" id="WP_000391517.1">
    <property type="nucleotide sequence ID" value="NZ_CP009968.1"/>
</dbReference>
<dbReference type="SMR" id="Q633Z4"/>
<dbReference type="GeneID" id="93006651"/>
<dbReference type="KEGG" id="bcz:BCE33L4194"/>
<dbReference type="PATRIC" id="fig|288681.22.peg.1189"/>
<dbReference type="Proteomes" id="UP000002612">
    <property type="component" value="Chromosome"/>
</dbReference>
<dbReference type="GO" id="GO:0000902">
    <property type="term" value="P:cell morphogenesis"/>
    <property type="evidence" value="ECO:0007669"/>
    <property type="project" value="InterPro"/>
</dbReference>
<dbReference type="GO" id="GO:0000917">
    <property type="term" value="P:division septum assembly"/>
    <property type="evidence" value="ECO:0007669"/>
    <property type="project" value="UniProtKB-KW"/>
</dbReference>
<dbReference type="GO" id="GO:1901891">
    <property type="term" value="P:regulation of cell septum assembly"/>
    <property type="evidence" value="ECO:0007669"/>
    <property type="project" value="InterPro"/>
</dbReference>
<dbReference type="FunFam" id="2.160.20.70:FF:000003">
    <property type="entry name" value="Probable septum site-determining protein MinC"/>
    <property type="match status" value="1"/>
</dbReference>
<dbReference type="FunFam" id="3.30.160.540:FF:000001">
    <property type="entry name" value="Probable septum site-determining protein MinC"/>
    <property type="match status" value="1"/>
</dbReference>
<dbReference type="Gene3D" id="2.160.20.70">
    <property type="match status" value="1"/>
</dbReference>
<dbReference type="Gene3D" id="3.30.160.540">
    <property type="match status" value="1"/>
</dbReference>
<dbReference type="HAMAP" id="MF_00267">
    <property type="entry name" value="MinC"/>
    <property type="match status" value="1"/>
</dbReference>
<dbReference type="InterPro" id="IPR016098">
    <property type="entry name" value="CAP/MinC_C"/>
</dbReference>
<dbReference type="InterPro" id="IPR013033">
    <property type="entry name" value="MinC"/>
</dbReference>
<dbReference type="InterPro" id="IPR036145">
    <property type="entry name" value="MinC_C_sf"/>
</dbReference>
<dbReference type="InterPro" id="IPR055219">
    <property type="entry name" value="MinC_N_1"/>
</dbReference>
<dbReference type="InterPro" id="IPR005526">
    <property type="entry name" value="Septum_form_inhib_MinC_C"/>
</dbReference>
<dbReference type="NCBIfam" id="TIGR01222">
    <property type="entry name" value="minC"/>
    <property type="match status" value="1"/>
</dbReference>
<dbReference type="PANTHER" id="PTHR34108">
    <property type="entry name" value="SEPTUM SITE-DETERMINING PROTEIN MINC"/>
    <property type="match status" value="1"/>
</dbReference>
<dbReference type="PANTHER" id="PTHR34108:SF1">
    <property type="entry name" value="SEPTUM SITE-DETERMINING PROTEIN MINC"/>
    <property type="match status" value="1"/>
</dbReference>
<dbReference type="Pfam" id="PF03775">
    <property type="entry name" value="MinC_C"/>
    <property type="match status" value="1"/>
</dbReference>
<dbReference type="Pfam" id="PF22642">
    <property type="entry name" value="MinC_N_1"/>
    <property type="match status" value="1"/>
</dbReference>
<dbReference type="SUPFAM" id="SSF63848">
    <property type="entry name" value="Cell-division inhibitor MinC, C-terminal domain"/>
    <property type="match status" value="1"/>
</dbReference>
<organism>
    <name type="scientific">Bacillus cereus (strain ZK / E33L)</name>
    <dbReference type="NCBI Taxonomy" id="288681"/>
    <lineage>
        <taxon>Bacteria</taxon>
        <taxon>Bacillati</taxon>
        <taxon>Bacillota</taxon>
        <taxon>Bacilli</taxon>
        <taxon>Bacillales</taxon>
        <taxon>Bacillaceae</taxon>
        <taxon>Bacillus</taxon>
        <taxon>Bacillus cereus group</taxon>
    </lineage>
</organism>
<name>MINC_BACCZ</name>
<gene>
    <name evidence="1" type="primary">minC</name>
    <name type="ordered locus">BCE33L4194</name>
</gene>
<protein>
    <recommendedName>
        <fullName evidence="1">Probable septum site-determining protein MinC</fullName>
    </recommendedName>
</protein>
<keyword id="KW-0131">Cell cycle</keyword>
<keyword id="KW-0132">Cell division</keyword>
<keyword id="KW-0717">Septation</keyword>
<sequence length="228" mass="25229">MEEKKQQNVTIKGTKDGITLHLDDCCSFSELLKELDEKLSTHYYDGDGRSLIEVHVKVGNRYLTEVQQEEIRTLIRNKKNLVVDSIESDVITKEEAIAWKEETEIVPISKIVRSGQVLHVKGNLLLIGDVNPGGTVIAGGNIFVVGSLRGIAHAGYYGDSDAVIAASVMNPMQLRISDVAMRAPEEKEDGAEAAECAYINENNHIVVDRLQLLTHLRPNLTKLERGIV</sequence>
<feature type="chain" id="PRO_1000047801" description="Probable septum site-determining protein MinC">
    <location>
        <begin position="1"/>
        <end position="228"/>
    </location>
</feature>
<accession>Q633Z4</accession>
<comment type="function">
    <text evidence="1">Cell division inhibitor that blocks the formation of polar Z ring septums. Rapidly oscillates between the poles of the cell to destabilize FtsZ filaments that have formed before they mature into polar Z rings. Prevents FtsZ polymerization.</text>
</comment>
<comment type="subunit">
    <text evidence="1">Interacts with MinD and FtsZ.</text>
</comment>
<comment type="similarity">
    <text evidence="1">Belongs to the MinC family.</text>
</comment>
<proteinExistence type="inferred from homology"/>
<reference key="1">
    <citation type="journal article" date="2006" name="J. Bacteriol.">
        <title>Pathogenomic sequence analysis of Bacillus cereus and Bacillus thuringiensis isolates closely related to Bacillus anthracis.</title>
        <authorList>
            <person name="Han C.S."/>
            <person name="Xie G."/>
            <person name="Challacombe J.F."/>
            <person name="Altherr M.R."/>
            <person name="Bhotika S.S."/>
            <person name="Bruce D."/>
            <person name="Campbell C.S."/>
            <person name="Campbell M.L."/>
            <person name="Chen J."/>
            <person name="Chertkov O."/>
            <person name="Cleland C."/>
            <person name="Dimitrijevic M."/>
            <person name="Doggett N.A."/>
            <person name="Fawcett J.J."/>
            <person name="Glavina T."/>
            <person name="Goodwin L.A."/>
            <person name="Hill K.K."/>
            <person name="Hitchcock P."/>
            <person name="Jackson P.J."/>
            <person name="Keim P."/>
            <person name="Kewalramani A.R."/>
            <person name="Longmire J."/>
            <person name="Lucas S."/>
            <person name="Malfatti S."/>
            <person name="McMurry K."/>
            <person name="Meincke L.J."/>
            <person name="Misra M."/>
            <person name="Moseman B.L."/>
            <person name="Mundt M."/>
            <person name="Munk A.C."/>
            <person name="Okinaka R.T."/>
            <person name="Parson-Quintana B."/>
            <person name="Reilly L.P."/>
            <person name="Richardson P."/>
            <person name="Robinson D.L."/>
            <person name="Rubin E."/>
            <person name="Saunders E."/>
            <person name="Tapia R."/>
            <person name="Tesmer J.G."/>
            <person name="Thayer N."/>
            <person name="Thompson L.S."/>
            <person name="Tice H."/>
            <person name="Ticknor L.O."/>
            <person name="Wills P.L."/>
            <person name="Brettin T.S."/>
            <person name="Gilna P."/>
        </authorList>
    </citation>
    <scope>NUCLEOTIDE SEQUENCE [LARGE SCALE GENOMIC DNA]</scope>
    <source>
        <strain>ZK / E33L</strain>
    </source>
</reference>
<evidence type="ECO:0000255" key="1">
    <source>
        <dbReference type="HAMAP-Rule" id="MF_00267"/>
    </source>
</evidence>